<evidence type="ECO:0000255" key="1">
    <source>
        <dbReference type="HAMAP-Rule" id="MF_00182"/>
    </source>
</evidence>
<evidence type="ECO:0000256" key="2">
    <source>
        <dbReference type="SAM" id="MobiDB-lite"/>
    </source>
</evidence>
<evidence type="ECO:0000305" key="3"/>
<protein>
    <recommendedName>
        <fullName evidence="1">Methionyl-tRNA formyltransferase</fullName>
        <ecNumber evidence="1">2.1.2.9</ecNumber>
    </recommendedName>
</protein>
<accession>P64135</accession>
<accession>A0A1R3XZ89</accession>
<accession>P71674</accession>
<accession>X2BHT2</accession>
<gene>
    <name evidence="1" type="primary">fmt</name>
    <name type="ordered locus">BQ2027_MB1441</name>
</gene>
<comment type="function">
    <text evidence="1">Attaches a formyl group to the free amino group of methionyl-tRNA(fMet). The formyl group appears to play a dual role in the initiator identity of N-formylmethionyl-tRNA by promoting its recognition by IF2 and preventing the misappropriation of this tRNA by the elongation apparatus.</text>
</comment>
<comment type="catalytic activity">
    <reaction evidence="1">
        <text>L-methionyl-tRNA(fMet) + (6R)-10-formyltetrahydrofolate = N-formyl-L-methionyl-tRNA(fMet) + (6S)-5,6,7,8-tetrahydrofolate + H(+)</text>
        <dbReference type="Rhea" id="RHEA:24380"/>
        <dbReference type="Rhea" id="RHEA-COMP:9952"/>
        <dbReference type="Rhea" id="RHEA-COMP:9953"/>
        <dbReference type="ChEBI" id="CHEBI:15378"/>
        <dbReference type="ChEBI" id="CHEBI:57453"/>
        <dbReference type="ChEBI" id="CHEBI:78530"/>
        <dbReference type="ChEBI" id="CHEBI:78844"/>
        <dbReference type="ChEBI" id="CHEBI:195366"/>
        <dbReference type="EC" id="2.1.2.9"/>
    </reaction>
</comment>
<comment type="similarity">
    <text evidence="1 3">Belongs to the Fmt family.</text>
</comment>
<feature type="chain" id="PRO_0000083001" description="Methionyl-tRNA formyltransferase">
    <location>
        <begin position="1"/>
        <end position="312"/>
    </location>
</feature>
<feature type="region of interest" description="Disordered" evidence="2">
    <location>
        <begin position="34"/>
        <end position="54"/>
    </location>
</feature>
<feature type="binding site" evidence="1">
    <location>
        <begin position="110"/>
        <end position="113"/>
    </location>
    <ligand>
        <name>(6S)-5,6,7,8-tetrahydrofolate</name>
        <dbReference type="ChEBI" id="CHEBI:57453"/>
    </ligand>
</feature>
<name>FMT_MYCBO</name>
<proteinExistence type="inferred from homology"/>
<reference key="1">
    <citation type="journal article" date="2003" name="Proc. Natl. Acad. Sci. U.S.A.">
        <title>The complete genome sequence of Mycobacterium bovis.</title>
        <authorList>
            <person name="Garnier T."/>
            <person name="Eiglmeier K."/>
            <person name="Camus J.-C."/>
            <person name="Medina N."/>
            <person name="Mansoor H."/>
            <person name="Pryor M."/>
            <person name="Duthoy S."/>
            <person name="Grondin S."/>
            <person name="Lacroix C."/>
            <person name="Monsempe C."/>
            <person name="Simon S."/>
            <person name="Harris B."/>
            <person name="Atkin R."/>
            <person name="Doggett J."/>
            <person name="Mayes R."/>
            <person name="Keating L."/>
            <person name="Wheeler P.R."/>
            <person name="Parkhill J."/>
            <person name="Barrell B.G."/>
            <person name="Cole S.T."/>
            <person name="Gordon S.V."/>
            <person name="Hewinson R.G."/>
        </authorList>
    </citation>
    <scope>NUCLEOTIDE SEQUENCE [LARGE SCALE GENOMIC DNA]</scope>
    <source>
        <strain>ATCC BAA-935 / AF2122/97</strain>
    </source>
</reference>
<reference key="2">
    <citation type="journal article" date="2017" name="Genome Announc.">
        <title>Updated reference genome sequence and annotation of Mycobacterium bovis AF2122/97.</title>
        <authorList>
            <person name="Malone K.M."/>
            <person name="Farrell D."/>
            <person name="Stuber T.P."/>
            <person name="Schubert O.T."/>
            <person name="Aebersold R."/>
            <person name="Robbe-Austerman S."/>
            <person name="Gordon S.V."/>
        </authorList>
    </citation>
    <scope>NUCLEOTIDE SEQUENCE [LARGE SCALE GENOMIC DNA]</scope>
    <scope>GENOME REANNOTATION</scope>
    <source>
        <strain>ATCC BAA-935 / AF2122/97</strain>
    </source>
</reference>
<keyword id="KW-0648">Protein biosynthesis</keyword>
<keyword id="KW-1185">Reference proteome</keyword>
<keyword id="KW-0808">Transferase</keyword>
<sequence>MRLVFAGTPEPALASLRRLIESPSHDVIAVLTRPDAASGRRGKPQPSPVAREAAERGIPVLRPSRPNSAEFVAELSDLAPECCAVVAYGALLGGPLLAVPPHGWVNLHFSLLPAWRGAAPVQAAIAAGDTITGATTFQIEPSLDSGPIYGVVTEVIQPTDTAGDLLKRLAVSGAALLSTTLDGIADQRLTPRPQPADGVSVAPKITVANARVRWDLPAAVVERRIRAVTPNPGAWTLIGDLRVKLGPVHLDAAHRPSKPLPPGGIHVERTSVWIGTGSEPVRLGQIQPPGKKLMNAADWARGARLDLAARAT</sequence>
<dbReference type="EC" id="2.1.2.9" evidence="1"/>
<dbReference type="EMBL" id="LT708304">
    <property type="protein sequence ID" value="SIU00044.1"/>
    <property type="molecule type" value="Genomic_DNA"/>
</dbReference>
<dbReference type="RefSeq" id="NP_855093.1">
    <property type="nucleotide sequence ID" value="NC_002945.3"/>
</dbReference>
<dbReference type="RefSeq" id="WP_003900336.1">
    <property type="nucleotide sequence ID" value="NC_002945.4"/>
</dbReference>
<dbReference type="SMR" id="P64135"/>
<dbReference type="GeneID" id="45425384"/>
<dbReference type="KEGG" id="mbo:BQ2027_MB1441"/>
<dbReference type="PATRIC" id="fig|233413.5.peg.1576"/>
<dbReference type="Proteomes" id="UP000001419">
    <property type="component" value="Chromosome"/>
</dbReference>
<dbReference type="GO" id="GO:0005829">
    <property type="term" value="C:cytosol"/>
    <property type="evidence" value="ECO:0007669"/>
    <property type="project" value="TreeGrafter"/>
</dbReference>
<dbReference type="GO" id="GO:0004479">
    <property type="term" value="F:methionyl-tRNA formyltransferase activity"/>
    <property type="evidence" value="ECO:0007669"/>
    <property type="project" value="UniProtKB-UniRule"/>
</dbReference>
<dbReference type="CDD" id="cd08646">
    <property type="entry name" value="FMT_core_Met-tRNA-FMT_N"/>
    <property type="match status" value="1"/>
</dbReference>
<dbReference type="CDD" id="cd08704">
    <property type="entry name" value="Met_tRNA_FMT_C"/>
    <property type="match status" value="1"/>
</dbReference>
<dbReference type="FunFam" id="3.40.50.12230:FF:000001">
    <property type="entry name" value="Methionyl-tRNA formyltransferase"/>
    <property type="match status" value="1"/>
</dbReference>
<dbReference type="Gene3D" id="3.40.50.12230">
    <property type="match status" value="1"/>
</dbReference>
<dbReference type="HAMAP" id="MF_00182">
    <property type="entry name" value="Formyl_trans"/>
    <property type="match status" value="1"/>
</dbReference>
<dbReference type="InterPro" id="IPR005794">
    <property type="entry name" value="Fmt"/>
</dbReference>
<dbReference type="InterPro" id="IPR005793">
    <property type="entry name" value="Formyl_trans_C"/>
</dbReference>
<dbReference type="InterPro" id="IPR002376">
    <property type="entry name" value="Formyl_transf_N"/>
</dbReference>
<dbReference type="InterPro" id="IPR036477">
    <property type="entry name" value="Formyl_transf_N_sf"/>
</dbReference>
<dbReference type="InterPro" id="IPR011034">
    <property type="entry name" value="Formyl_transferase-like_C_sf"/>
</dbReference>
<dbReference type="InterPro" id="IPR044135">
    <property type="entry name" value="Met-tRNA-FMT_C"/>
</dbReference>
<dbReference type="InterPro" id="IPR041711">
    <property type="entry name" value="Met-tRNA-FMT_N"/>
</dbReference>
<dbReference type="NCBIfam" id="TIGR00460">
    <property type="entry name" value="fmt"/>
    <property type="match status" value="1"/>
</dbReference>
<dbReference type="PANTHER" id="PTHR11138">
    <property type="entry name" value="METHIONYL-TRNA FORMYLTRANSFERASE"/>
    <property type="match status" value="1"/>
</dbReference>
<dbReference type="PANTHER" id="PTHR11138:SF5">
    <property type="entry name" value="METHIONYL-TRNA FORMYLTRANSFERASE, MITOCHONDRIAL"/>
    <property type="match status" value="1"/>
</dbReference>
<dbReference type="Pfam" id="PF02911">
    <property type="entry name" value="Formyl_trans_C"/>
    <property type="match status" value="1"/>
</dbReference>
<dbReference type="Pfam" id="PF00551">
    <property type="entry name" value="Formyl_trans_N"/>
    <property type="match status" value="1"/>
</dbReference>
<dbReference type="SUPFAM" id="SSF50486">
    <property type="entry name" value="FMT C-terminal domain-like"/>
    <property type="match status" value="1"/>
</dbReference>
<dbReference type="SUPFAM" id="SSF53328">
    <property type="entry name" value="Formyltransferase"/>
    <property type="match status" value="1"/>
</dbReference>
<organism>
    <name type="scientific">Mycobacterium bovis (strain ATCC BAA-935 / AF2122/97)</name>
    <dbReference type="NCBI Taxonomy" id="233413"/>
    <lineage>
        <taxon>Bacteria</taxon>
        <taxon>Bacillati</taxon>
        <taxon>Actinomycetota</taxon>
        <taxon>Actinomycetes</taxon>
        <taxon>Mycobacteriales</taxon>
        <taxon>Mycobacteriaceae</taxon>
        <taxon>Mycobacterium</taxon>
        <taxon>Mycobacterium tuberculosis complex</taxon>
    </lineage>
</organism>